<reference key="1">
    <citation type="journal article" date="1998" name="J. Biol. Chem.">
        <title>The Rana catesbeiana rcr gene encoding a cytotoxic ribonuclease. Tissue distribution, cloning, purification, cytotoxicity, and active residues for RNase activity.</title>
        <authorList>
            <person name="Huang H.C."/>
            <person name="Wang S.C."/>
            <person name="Leu Y.J."/>
            <person name="Lu S.C."/>
            <person name="Liao Y.D."/>
        </authorList>
    </citation>
    <scope>NUCLEOTIDE SEQUENCE [MRNA]</scope>
    <source>
        <tissue>Liver</tissue>
    </source>
</reference>
<reference key="2">
    <citation type="journal article" date="1987" name="Biochemistry">
        <title>Amino acid sequence of sialic acid binding lectin from frog (Rana catesbeiana) eggs.</title>
        <authorList>
            <person name="Titani K."/>
            <person name="Takio K."/>
            <person name="Kuwada M."/>
            <person name="Nitta K."/>
            <person name="Sakakibara F."/>
            <person name="Kawauchi H."/>
            <person name="Takayanagi G."/>
            <person name="Hakomori S."/>
        </authorList>
    </citation>
    <scope>PROTEIN SEQUENCE OF 23-133</scope>
    <scope>PYROGLUTAMATE FORMATION AT GLN-23</scope>
    <source>
        <tissue>Egg</tissue>
    </source>
</reference>
<reference key="3">
    <citation type="journal article" date="1992" name="Nucleic Acids Res.">
        <title>A pyrimidine-guanine sequence-specific ribonuclease from Rana catesbeiana (bullfrog) oocytes.</title>
        <authorList>
            <person name="Liao Y.-D."/>
        </authorList>
    </citation>
    <scope>CHARACTERIZATION</scope>
    <scope>PROTEIN SEQUENCE OF 81-101</scope>
</reference>
<reference key="4">
    <citation type="journal article" date="1993" name="Glycobiology">
        <title>Ribonuclease activity of sialic acid-binding lectin from Rana catesbeiana eggs.</title>
        <authorList>
            <person name="Nitta K."/>
            <person name="Oyama F."/>
            <person name="Oyama R."/>
            <person name="Sekiguchi K."/>
            <person name="Kawauchi H."/>
            <person name="Takayanagi Y."/>
            <person name="Hakomori S."/>
            <person name="Titani K."/>
        </authorList>
    </citation>
    <scope>CHARACTERIZATION</scope>
    <source>
        <tissue>Egg</tissue>
    </source>
</reference>
<reference key="5">
    <citation type="journal article" date="1996" name="J. Biomol. NMR">
        <title>The secondary structure of a pyrimidine-guanine sequence-specific ribonuclease possessing cytotoxic activity from the oocytes of Rana catesbeiana.</title>
        <authorList>
            <person name="Chen C."/>
            <person name="Hom K."/>
            <person name="Huang R.F."/>
            <person name="Chou P.J."/>
            <person name="Liao Y.D."/>
            <person name="Huang T."/>
        </authorList>
    </citation>
    <scope>STRUCTURE BY NMR OF 23-133</scope>
</reference>
<reference key="6">
    <citation type="journal article" date="1998" name="J. Mol. Biol.">
        <title>The solution structure of a cytotoxic ribonuclease from the oocytes of Rana catesbeiana (bullfrog).</title>
        <authorList>
            <person name="Chang C.-F."/>
            <person name="Chen C."/>
            <person name="Chen Y.-C."/>
            <person name="Hom K."/>
            <person name="Huang R.-F."/>
            <person name="Huang T.H."/>
        </authorList>
    </citation>
    <scope>STRUCTURE BY NMR OF 23-133</scope>
</reference>
<organism>
    <name type="scientific">Aquarana catesbeiana</name>
    <name type="common">American bullfrog</name>
    <name type="synonym">Rana catesbeiana</name>
    <dbReference type="NCBI Taxonomy" id="8400"/>
    <lineage>
        <taxon>Eukaryota</taxon>
        <taxon>Metazoa</taxon>
        <taxon>Chordata</taxon>
        <taxon>Craniata</taxon>
        <taxon>Vertebrata</taxon>
        <taxon>Euteleostomi</taxon>
        <taxon>Amphibia</taxon>
        <taxon>Batrachia</taxon>
        <taxon>Anura</taxon>
        <taxon>Neobatrachia</taxon>
        <taxon>Ranoidea</taxon>
        <taxon>Ranidae</taxon>
        <taxon>Aquarana</taxon>
    </lineage>
</organism>
<evidence type="ECO:0000269" key="1">
    <source>
    </source>
</evidence>
<evidence type="ECO:0000305" key="2"/>
<evidence type="ECO:0007829" key="3">
    <source>
        <dbReference type="PDB" id="1BC4"/>
    </source>
</evidence>
<evidence type="ECO:0007829" key="4">
    <source>
        <dbReference type="PDB" id="1M07"/>
    </source>
</evidence>
<sequence length="133" mass="14762">MCAKSLLLVFGILLGLSHLSLSQNWATFQQKHIINTPIINCNTIMDNNIYIVGGQCKRVNTFIISSATTVKAICTGVINMNVLSTTRFQLNTCTRTSITPRPCPYSSRTETNYICVKCENQYPVHFAGIGRCP</sequence>
<name>RNASO_AQUCT</name>
<feature type="signal peptide" evidence="1">
    <location>
        <begin position="1"/>
        <end position="22"/>
    </location>
</feature>
<feature type="chain" id="PRO_0000030911" description="Oocytes ribonuclease">
    <location>
        <begin position="23"/>
        <end position="133"/>
    </location>
</feature>
<feature type="active site" description="Proton acceptor">
    <location>
        <position position="32"/>
    </location>
</feature>
<feature type="active site" description="Proton donor">
    <location>
        <position position="125"/>
    </location>
</feature>
<feature type="binding site">
    <location>
        <begin position="57"/>
        <end position="61"/>
    </location>
    <ligand>
        <name>substrate</name>
    </ligand>
</feature>
<feature type="modified residue" description="Pyrrolidone carboxylic acid" evidence="1">
    <location>
        <position position="23"/>
    </location>
</feature>
<feature type="disulfide bond">
    <location>
        <begin position="41"/>
        <end position="93"/>
    </location>
</feature>
<feature type="disulfide bond">
    <location>
        <begin position="56"/>
        <end position="103"/>
    </location>
</feature>
<feature type="disulfide bond">
    <location>
        <begin position="74"/>
        <end position="118"/>
    </location>
</feature>
<feature type="disulfide bond">
    <location>
        <begin position="115"/>
        <end position="132"/>
    </location>
</feature>
<feature type="helix" evidence="4">
    <location>
        <begin position="25"/>
        <end position="32"/>
    </location>
</feature>
<feature type="strand" evidence="4">
    <location>
        <begin position="33"/>
        <end position="36"/>
    </location>
</feature>
<feature type="helix" evidence="4">
    <location>
        <begin position="41"/>
        <end position="44"/>
    </location>
</feature>
<feature type="helix" evidence="4">
    <location>
        <begin position="48"/>
        <end position="50"/>
    </location>
</feature>
<feature type="strand" evidence="3">
    <location>
        <begin position="53"/>
        <end position="56"/>
    </location>
</feature>
<feature type="strand" evidence="4">
    <location>
        <begin position="58"/>
        <end position="65"/>
    </location>
</feature>
<feature type="helix" evidence="4">
    <location>
        <begin position="67"/>
        <end position="71"/>
    </location>
</feature>
<feature type="helix" evidence="4">
    <location>
        <begin position="72"/>
        <end position="74"/>
    </location>
</feature>
<feature type="strand" evidence="4">
    <location>
        <begin position="78"/>
        <end position="83"/>
    </location>
</feature>
<feature type="strand" evidence="4">
    <location>
        <begin position="88"/>
        <end position="96"/>
    </location>
</feature>
<feature type="strand" evidence="3">
    <location>
        <begin position="97"/>
        <end position="99"/>
    </location>
</feature>
<feature type="strand" evidence="4">
    <location>
        <begin position="100"/>
        <end position="102"/>
    </location>
</feature>
<feature type="strand" evidence="4">
    <location>
        <begin position="105"/>
        <end position="112"/>
    </location>
</feature>
<feature type="strand" evidence="4">
    <location>
        <begin position="114"/>
        <end position="119"/>
    </location>
</feature>
<feature type="strand" evidence="4">
    <location>
        <begin position="122"/>
        <end position="131"/>
    </location>
</feature>
<protein>
    <recommendedName>
        <fullName>Oocytes ribonuclease</fullName>
        <ecNumber>3.1.27.-</ecNumber>
    </recommendedName>
    <alternativeName>
        <fullName>RC-RNase</fullName>
    </alternativeName>
    <alternativeName>
        <fullName>Sialic acid-binding lectin</fullName>
        <shortName>SBL-C</shortName>
    </alternativeName>
</protein>
<keyword id="KW-0002">3D-structure</keyword>
<keyword id="KW-0903">Direct protein sequencing</keyword>
<keyword id="KW-1015">Disulfide bond</keyword>
<keyword id="KW-0255">Endonuclease</keyword>
<keyword id="KW-0378">Hydrolase</keyword>
<keyword id="KW-0430">Lectin</keyword>
<keyword id="KW-0540">Nuclease</keyword>
<keyword id="KW-0873">Pyrrolidone carboxylic acid</keyword>
<keyword id="KW-0964">Secreted</keyword>
<keyword id="KW-0732">Signal</keyword>
<gene>
    <name type="primary">RCR</name>
</gene>
<dbReference type="EC" id="3.1.27.-"/>
<dbReference type="EMBL" id="AF039104">
    <property type="protein sequence ID" value="AAD10702.1"/>
    <property type="molecule type" value="mRNA"/>
</dbReference>
<dbReference type="PIR" id="A27121">
    <property type="entry name" value="A27121"/>
</dbReference>
<dbReference type="PDB" id="1BC4">
    <property type="method" value="NMR"/>
    <property type="chains" value="A=24-133"/>
</dbReference>
<dbReference type="PDB" id="1KM8">
    <property type="method" value="X-ray"/>
    <property type="resolution" value="1.90 A"/>
    <property type="chains" value="A=23-133"/>
</dbReference>
<dbReference type="PDB" id="1KM9">
    <property type="method" value="X-ray"/>
    <property type="resolution" value="1.96 A"/>
    <property type="chains" value="A=23-133"/>
</dbReference>
<dbReference type="PDB" id="1M07">
    <property type="method" value="X-ray"/>
    <property type="resolution" value="1.80 A"/>
    <property type="chains" value="A/B=23-133"/>
</dbReference>
<dbReference type="PDBsum" id="1BC4"/>
<dbReference type="PDBsum" id="1KM8"/>
<dbReference type="PDBsum" id="1KM9"/>
<dbReference type="PDBsum" id="1M07"/>
<dbReference type="BMRB" id="P11916"/>
<dbReference type="SMR" id="P11916"/>
<dbReference type="EvolutionaryTrace" id="P11916"/>
<dbReference type="GO" id="GO:0005576">
    <property type="term" value="C:extracellular region"/>
    <property type="evidence" value="ECO:0007669"/>
    <property type="project" value="UniProtKB-SubCell"/>
</dbReference>
<dbReference type="GO" id="GO:0030246">
    <property type="term" value="F:carbohydrate binding"/>
    <property type="evidence" value="ECO:0007669"/>
    <property type="project" value="UniProtKB-KW"/>
</dbReference>
<dbReference type="GO" id="GO:0004519">
    <property type="term" value="F:endonuclease activity"/>
    <property type="evidence" value="ECO:0007669"/>
    <property type="project" value="UniProtKB-KW"/>
</dbReference>
<dbReference type="GO" id="GO:0003676">
    <property type="term" value="F:nucleic acid binding"/>
    <property type="evidence" value="ECO:0007669"/>
    <property type="project" value="InterPro"/>
</dbReference>
<dbReference type="GO" id="GO:0004540">
    <property type="term" value="F:RNA nuclease activity"/>
    <property type="evidence" value="ECO:0007669"/>
    <property type="project" value="TreeGrafter"/>
</dbReference>
<dbReference type="GO" id="GO:0050830">
    <property type="term" value="P:defense response to Gram-positive bacterium"/>
    <property type="evidence" value="ECO:0007669"/>
    <property type="project" value="TreeGrafter"/>
</dbReference>
<dbReference type="CDD" id="cd06265">
    <property type="entry name" value="RNase_A_canonical"/>
    <property type="match status" value="1"/>
</dbReference>
<dbReference type="Gene3D" id="3.10.130.10">
    <property type="entry name" value="Ribonuclease A-like domain"/>
    <property type="match status" value="1"/>
</dbReference>
<dbReference type="InterPro" id="IPR001427">
    <property type="entry name" value="RNaseA"/>
</dbReference>
<dbReference type="InterPro" id="IPR036816">
    <property type="entry name" value="RNaseA-like_dom_sf"/>
</dbReference>
<dbReference type="InterPro" id="IPR023411">
    <property type="entry name" value="RNaseA_AS"/>
</dbReference>
<dbReference type="InterPro" id="IPR023412">
    <property type="entry name" value="RNaseA_domain"/>
</dbReference>
<dbReference type="PANTHER" id="PTHR11437">
    <property type="entry name" value="RIBONUCLEASE"/>
    <property type="match status" value="1"/>
</dbReference>
<dbReference type="PANTHER" id="PTHR11437:SF66">
    <property type="entry name" value="RNASE 3"/>
    <property type="match status" value="1"/>
</dbReference>
<dbReference type="Pfam" id="PF00074">
    <property type="entry name" value="RnaseA"/>
    <property type="match status" value="1"/>
</dbReference>
<dbReference type="SMART" id="SM00092">
    <property type="entry name" value="RNAse_Pc"/>
    <property type="match status" value="1"/>
</dbReference>
<dbReference type="SUPFAM" id="SSF54076">
    <property type="entry name" value="RNase A-like"/>
    <property type="match status" value="1"/>
</dbReference>
<dbReference type="PROSITE" id="PS00127">
    <property type="entry name" value="RNASE_PANCREATIC"/>
    <property type="match status" value="1"/>
</dbReference>
<accession>P11916</accession>
<accession>Q9PWR7</accession>
<proteinExistence type="evidence at protein level"/>
<comment type="function">
    <text>Preferentially cleaves single-stranded RNA at pyrimidine residues with a 3'flanking guanine. Hydrolyzes poly(U) and poly(C) as substrates, and prefers the former. The S-lectins in frog eggs may be involved in the fertilization and development of the frog embryo. This lectin agglutinates various animal cells, including normal lymphocytes, erythrocytes, and fibroblasts of animal and human origin. It is cytotoxic against several tumor cells.</text>
</comment>
<comment type="subunit">
    <text>Monomer.</text>
</comment>
<comment type="subcellular location">
    <subcellularLocation>
        <location>Secreted</location>
    </subcellularLocation>
</comment>
<comment type="similarity">
    <text evidence="2">Belongs to the pancreatic ribonuclease family.</text>
</comment>